<protein>
    <recommendedName>
        <fullName>Ferritin-1, chloroplastic</fullName>
        <ecNumber>1.16.3.1</ecNumber>
    </recommendedName>
</protein>
<gene>
    <name type="primary">LSC30</name>
</gene>
<name>FRI1_BRANA</name>
<reference key="1">
    <citation type="journal article" date="1997" name="Plant Mol. Biol.">
        <title>Leaf senescence in Brassica napus: cloning of senescence related genes by subtractive hybridisation.</title>
        <authorList>
            <person name="Buchanan-Wollaston V."/>
            <person name="Ainsworth C."/>
        </authorList>
    </citation>
    <scope>NUCLEOTIDE SEQUENCE [MRNA]</scope>
    <source>
        <strain>cv. Falcon</strain>
    </source>
</reference>
<comment type="function">
    <text evidence="1">Stores iron in a soluble, non-toxic, readily available form. Important for iron homeostasis. Has ferroxidase activity. Iron is taken up in the ferrous form and deposited as ferric hydroxides after oxidation (By similarity).</text>
</comment>
<comment type="catalytic activity">
    <reaction>
        <text>4 Fe(2+) + O2 + 4 H(+) = 4 Fe(3+) + 2 H2O</text>
        <dbReference type="Rhea" id="RHEA:11148"/>
        <dbReference type="ChEBI" id="CHEBI:15377"/>
        <dbReference type="ChEBI" id="CHEBI:15378"/>
        <dbReference type="ChEBI" id="CHEBI:15379"/>
        <dbReference type="ChEBI" id="CHEBI:29033"/>
        <dbReference type="ChEBI" id="CHEBI:29034"/>
        <dbReference type="EC" id="1.16.3.1"/>
    </reaction>
</comment>
<comment type="subunit">
    <text evidence="1">Oligomer of 24 subunits. There are two types of subunits: L (light) chain and H (heavy) chain. The major chain can be light or heavy, depending on the species and tissue type. The functional molecule forms a roughly spherical shell with a diameter of 12 nm and contains a central cavity into which the insoluble mineral iron core is deposited (By similarity).</text>
</comment>
<comment type="subcellular location">
    <subcellularLocation>
        <location evidence="1">Plastid</location>
        <location evidence="1">Chloroplast</location>
    </subcellularLocation>
</comment>
<comment type="similarity">
    <text evidence="4">Belongs to the ferritin family.</text>
</comment>
<proteinExistence type="evidence at transcript level"/>
<accession>Q96540</accession>
<evidence type="ECO:0000250" key="1"/>
<evidence type="ECO:0000255" key="2"/>
<evidence type="ECO:0000255" key="3">
    <source>
        <dbReference type="PROSITE-ProRule" id="PRU00085"/>
    </source>
</evidence>
<evidence type="ECO:0000305" key="4"/>
<keyword id="KW-0150">Chloroplast</keyword>
<keyword id="KW-0408">Iron</keyword>
<keyword id="KW-0409">Iron storage</keyword>
<keyword id="KW-0479">Metal-binding</keyword>
<keyword id="KW-0560">Oxidoreductase</keyword>
<keyword id="KW-0934">Plastid</keyword>
<keyword id="KW-0809">Transit peptide</keyword>
<dbReference type="EC" id="1.16.3.1"/>
<dbReference type="EMBL" id="U68217">
    <property type="protein sequence ID" value="AAB53099.1"/>
    <property type="molecule type" value="mRNA"/>
</dbReference>
<dbReference type="PIR" id="T08593">
    <property type="entry name" value="T08593"/>
</dbReference>
<dbReference type="RefSeq" id="NP_001302570.1">
    <property type="nucleotide sequence ID" value="NM_001315641.1"/>
</dbReference>
<dbReference type="SMR" id="Q96540"/>
<dbReference type="GeneID" id="106433816"/>
<dbReference type="KEGG" id="bna:106433816"/>
<dbReference type="OrthoDB" id="186462at2759"/>
<dbReference type="GO" id="GO:0009507">
    <property type="term" value="C:chloroplast"/>
    <property type="evidence" value="ECO:0007669"/>
    <property type="project" value="UniProtKB-SubCell"/>
</dbReference>
<dbReference type="GO" id="GO:0008199">
    <property type="term" value="F:ferric iron binding"/>
    <property type="evidence" value="ECO:0007669"/>
    <property type="project" value="InterPro"/>
</dbReference>
<dbReference type="GO" id="GO:0004322">
    <property type="term" value="F:ferroxidase activity"/>
    <property type="evidence" value="ECO:0007669"/>
    <property type="project" value="UniProtKB-EC"/>
</dbReference>
<dbReference type="GO" id="GO:0006879">
    <property type="term" value="P:intracellular iron ion homeostasis"/>
    <property type="evidence" value="ECO:0007669"/>
    <property type="project" value="UniProtKB-KW"/>
</dbReference>
<dbReference type="GO" id="GO:0006826">
    <property type="term" value="P:iron ion transport"/>
    <property type="evidence" value="ECO:0007669"/>
    <property type="project" value="InterPro"/>
</dbReference>
<dbReference type="CDD" id="cd01056">
    <property type="entry name" value="Euk_Ferritin"/>
    <property type="match status" value="1"/>
</dbReference>
<dbReference type="FunFam" id="1.20.1260.10:FF:000006">
    <property type="entry name" value="Ferritin"/>
    <property type="match status" value="1"/>
</dbReference>
<dbReference type="Gene3D" id="1.20.1260.10">
    <property type="match status" value="1"/>
</dbReference>
<dbReference type="InterPro" id="IPR001519">
    <property type="entry name" value="Ferritin"/>
</dbReference>
<dbReference type="InterPro" id="IPR012347">
    <property type="entry name" value="Ferritin-like"/>
</dbReference>
<dbReference type="InterPro" id="IPR009040">
    <property type="entry name" value="Ferritin-like_diiron"/>
</dbReference>
<dbReference type="InterPro" id="IPR009078">
    <property type="entry name" value="Ferritin-like_SF"/>
</dbReference>
<dbReference type="InterPro" id="IPR014034">
    <property type="entry name" value="Ferritin_CS"/>
</dbReference>
<dbReference type="InterPro" id="IPR008331">
    <property type="entry name" value="Ferritin_DPS_dom"/>
</dbReference>
<dbReference type="PANTHER" id="PTHR11431">
    <property type="entry name" value="FERRITIN"/>
    <property type="match status" value="1"/>
</dbReference>
<dbReference type="PANTHER" id="PTHR11431:SF122">
    <property type="entry name" value="FERRITIN-1, CHLOROPLASTIC"/>
    <property type="match status" value="1"/>
</dbReference>
<dbReference type="Pfam" id="PF00210">
    <property type="entry name" value="Ferritin"/>
    <property type="match status" value="1"/>
</dbReference>
<dbReference type="SUPFAM" id="SSF47240">
    <property type="entry name" value="Ferritin-like"/>
    <property type="match status" value="1"/>
</dbReference>
<dbReference type="PROSITE" id="PS00540">
    <property type="entry name" value="FERRITIN_1"/>
    <property type="match status" value="1"/>
</dbReference>
<dbReference type="PROSITE" id="PS00204">
    <property type="entry name" value="FERRITIN_2"/>
    <property type="match status" value="1"/>
</dbReference>
<dbReference type="PROSITE" id="PS50905">
    <property type="entry name" value="FERRITIN_LIKE"/>
    <property type="match status" value="1"/>
</dbReference>
<organism>
    <name type="scientific">Brassica napus</name>
    <name type="common">Rape</name>
    <dbReference type="NCBI Taxonomy" id="3708"/>
    <lineage>
        <taxon>Eukaryota</taxon>
        <taxon>Viridiplantae</taxon>
        <taxon>Streptophyta</taxon>
        <taxon>Embryophyta</taxon>
        <taxon>Tracheophyta</taxon>
        <taxon>Spermatophyta</taxon>
        <taxon>Magnoliopsida</taxon>
        <taxon>eudicotyledons</taxon>
        <taxon>Gunneridae</taxon>
        <taxon>Pentapetalae</taxon>
        <taxon>rosids</taxon>
        <taxon>malvids</taxon>
        <taxon>Brassicales</taxon>
        <taxon>Brassicaceae</taxon>
        <taxon>Brassiceae</taxon>
        <taxon>Brassica</taxon>
    </lineage>
</organism>
<sequence length="254" mass="28169">MASKALSSFTAKPAVSLLPHGVSSSASPSVMSLSFSRHTGGRGVVAASSTVDTNNMPMTGVVFQPFEEVKKADLAIPITSNASLARQRYADSSEAAINEQINVEYNVSYVYHSMYAYFDRDNVALKGLAKFFKESSDEEREHAEKFMEYQNQRGGRVTLHPIVSPISDFEHAEKGDALYAMELALSLEKLTNEKLLNLHRVASENNDPQLADFVESEFLGEQIEAIKKISDFITQLRMVGKGHGVWHFDQMLLN</sequence>
<feature type="transit peptide" description="Chloroplast" evidence="2">
    <location>
        <begin position="1"/>
        <end position="47"/>
    </location>
</feature>
<feature type="chain" id="PRO_0000008858" description="Ferritin-1, chloroplastic">
    <location>
        <begin position="48"/>
        <end position="254"/>
    </location>
</feature>
<feature type="domain" description="Ferritin-like diiron" evidence="3">
    <location>
        <begin position="87"/>
        <end position="240"/>
    </location>
</feature>
<feature type="region of interest" description="Extension peptide (EP)">
    <location>
        <begin position="48"/>
        <end position="86"/>
    </location>
</feature>
<feature type="binding site" evidence="3">
    <location>
        <position position="104"/>
    </location>
    <ligand>
        <name>Fe cation</name>
        <dbReference type="ChEBI" id="CHEBI:24875"/>
        <label>1</label>
    </ligand>
</feature>
<feature type="binding site" evidence="3">
    <location>
        <position position="139"/>
    </location>
    <ligand>
        <name>Fe cation</name>
        <dbReference type="ChEBI" id="CHEBI:24875"/>
        <label>1</label>
    </ligand>
</feature>
<feature type="binding site" evidence="3">
    <location>
        <position position="139"/>
    </location>
    <ligand>
        <name>Fe cation</name>
        <dbReference type="ChEBI" id="CHEBI:24875"/>
        <label>2</label>
    </ligand>
</feature>
<feature type="binding site" evidence="3">
    <location>
        <position position="142"/>
    </location>
    <ligand>
        <name>Fe cation</name>
        <dbReference type="ChEBI" id="CHEBI:24875"/>
        <label>1</label>
    </ligand>
</feature>
<feature type="binding site" evidence="3">
    <location>
        <position position="188"/>
    </location>
    <ligand>
        <name>Fe cation</name>
        <dbReference type="ChEBI" id="CHEBI:24875"/>
        <label>2</label>
    </ligand>
</feature>
<feature type="binding site" evidence="3">
    <location>
        <position position="222"/>
    </location>
    <ligand>
        <name>Fe cation</name>
        <dbReference type="ChEBI" id="CHEBI:24875"/>
        <label>2</label>
    </ligand>
</feature>